<dbReference type="EC" id="2.3.3.9" evidence="1"/>
<dbReference type="EMBL" id="AL123456">
    <property type="protein sequence ID" value="CCP44603.1"/>
    <property type="molecule type" value="Genomic_DNA"/>
</dbReference>
<dbReference type="PIR" id="F70722">
    <property type="entry name" value="F70722"/>
</dbReference>
<dbReference type="RefSeq" id="NP_216353.1">
    <property type="nucleotide sequence ID" value="NC_000962.3"/>
</dbReference>
<dbReference type="RefSeq" id="WP_003409271.1">
    <property type="nucleotide sequence ID" value="NZ_NVQJ01000013.1"/>
</dbReference>
<dbReference type="PDB" id="2GQ3">
    <property type="method" value="X-ray"/>
    <property type="resolution" value="2.30 A"/>
    <property type="chains" value="A/B=1-727"/>
</dbReference>
<dbReference type="PDB" id="3S9I">
    <property type="method" value="X-ray"/>
    <property type="resolution" value="1.90 A"/>
    <property type="chains" value="A=1-741"/>
</dbReference>
<dbReference type="PDB" id="3S9Z">
    <property type="method" value="X-ray"/>
    <property type="resolution" value="1.79 A"/>
    <property type="chains" value="A=1-741"/>
</dbReference>
<dbReference type="PDB" id="3SAD">
    <property type="method" value="X-ray"/>
    <property type="resolution" value="1.82 A"/>
    <property type="chains" value="A=1-741"/>
</dbReference>
<dbReference type="PDB" id="3SAZ">
    <property type="method" value="X-ray"/>
    <property type="resolution" value="2.04 A"/>
    <property type="chains" value="A=1-741"/>
</dbReference>
<dbReference type="PDB" id="3SB0">
    <property type="method" value="X-ray"/>
    <property type="resolution" value="2.20 A"/>
    <property type="chains" value="A=1-741"/>
</dbReference>
<dbReference type="PDB" id="5C7V">
    <property type="method" value="X-ray"/>
    <property type="resolution" value="2.50 A"/>
    <property type="chains" value="A=1-741"/>
</dbReference>
<dbReference type="PDB" id="5C9R">
    <property type="method" value="X-ray"/>
    <property type="resolution" value="2.00 A"/>
    <property type="chains" value="A=1-741"/>
</dbReference>
<dbReference type="PDB" id="5C9U">
    <property type="method" value="X-ray"/>
    <property type="resolution" value="1.95 A"/>
    <property type="chains" value="A=1-741"/>
</dbReference>
<dbReference type="PDB" id="5C9W">
    <property type="method" value="X-ray"/>
    <property type="resolution" value="2.09 A"/>
    <property type="chains" value="A=1-741"/>
</dbReference>
<dbReference type="PDB" id="5C9X">
    <property type="method" value="X-ray"/>
    <property type="resolution" value="2.10 A"/>
    <property type="chains" value="A=1-741"/>
</dbReference>
<dbReference type="PDB" id="5CAH">
    <property type="method" value="X-ray"/>
    <property type="resolution" value="2.30 A"/>
    <property type="chains" value="A=1-741"/>
</dbReference>
<dbReference type="PDB" id="5CAK">
    <property type="method" value="X-ray"/>
    <property type="resolution" value="1.99 A"/>
    <property type="chains" value="A=1-741"/>
</dbReference>
<dbReference type="PDB" id="5CBB">
    <property type="method" value="X-ray"/>
    <property type="resolution" value="2.01 A"/>
    <property type="chains" value="A=1-741"/>
</dbReference>
<dbReference type="PDB" id="5CBI">
    <property type="method" value="X-ray"/>
    <property type="resolution" value="1.99 A"/>
    <property type="chains" value="A=1-741"/>
</dbReference>
<dbReference type="PDB" id="5CBJ">
    <property type="method" value="X-ray"/>
    <property type="resolution" value="1.96 A"/>
    <property type="chains" value="A=1-741"/>
</dbReference>
<dbReference type="PDB" id="5CC3">
    <property type="method" value="X-ray"/>
    <property type="resolution" value="2.20 A"/>
    <property type="chains" value="A=1-741"/>
</dbReference>
<dbReference type="PDB" id="5CC5">
    <property type="method" value="X-ray"/>
    <property type="resolution" value="2.14 A"/>
    <property type="chains" value="A=1-741"/>
</dbReference>
<dbReference type="PDB" id="5CC6">
    <property type="method" value="X-ray"/>
    <property type="resolution" value="2.10 A"/>
    <property type="chains" value="A=1-741"/>
</dbReference>
<dbReference type="PDB" id="5CC7">
    <property type="method" value="X-ray"/>
    <property type="resolution" value="2.12 A"/>
    <property type="chains" value="A=1-741"/>
</dbReference>
<dbReference type="PDB" id="5CCZ">
    <property type="method" value="X-ray"/>
    <property type="resolution" value="2.14 A"/>
    <property type="chains" value="A=1-741"/>
</dbReference>
<dbReference type="PDB" id="5CEW">
    <property type="method" value="X-ray"/>
    <property type="resolution" value="2.03 A"/>
    <property type="chains" value="A=1-741"/>
</dbReference>
<dbReference type="PDB" id="5CJM">
    <property type="method" value="X-ray"/>
    <property type="resolution" value="2.13 A"/>
    <property type="chains" value="A=1-741"/>
</dbReference>
<dbReference type="PDB" id="5CJN">
    <property type="method" value="X-ray"/>
    <property type="resolution" value="2.19 A"/>
    <property type="chains" value="A=1-741"/>
</dbReference>
<dbReference type="PDB" id="5DRC">
    <property type="method" value="X-ray"/>
    <property type="resolution" value="2.18 A"/>
    <property type="chains" value="A=1-741"/>
</dbReference>
<dbReference type="PDB" id="5DRI">
    <property type="method" value="X-ray"/>
    <property type="resolution" value="2.80 A"/>
    <property type="chains" value="A=1-741"/>
</dbReference>
<dbReference type="PDB" id="5DX7">
    <property type="method" value="X-ray"/>
    <property type="resolution" value="2.10 A"/>
    <property type="chains" value="A=1-741"/>
</dbReference>
<dbReference type="PDB" id="5E9X">
    <property type="method" value="X-ray"/>
    <property type="resolution" value="1.94 A"/>
    <property type="chains" value="A=1-741"/>
</dbReference>
<dbReference type="PDB" id="5ECV">
    <property type="method" value="X-ray"/>
    <property type="resolution" value="2.08 A"/>
    <property type="chains" value="A=1-741"/>
</dbReference>
<dbReference type="PDB" id="5H8M">
    <property type="method" value="X-ray"/>
    <property type="resolution" value="2.70 A"/>
    <property type="chains" value="A=1-741"/>
</dbReference>
<dbReference type="PDB" id="5H8P">
    <property type="method" value="X-ray"/>
    <property type="resolution" value="2.10 A"/>
    <property type="chains" value="A=1-741"/>
</dbReference>
<dbReference type="PDB" id="5H8U">
    <property type="method" value="X-ray"/>
    <property type="resolution" value="2.85 A"/>
    <property type="chains" value="A/B=1-741"/>
</dbReference>
<dbReference type="PDB" id="5T8G">
    <property type="method" value="X-ray"/>
    <property type="resolution" value="2.04 A"/>
    <property type="chains" value="A=1-741"/>
</dbReference>
<dbReference type="PDB" id="6APZ">
    <property type="method" value="X-ray"/>
    <property type="resolution" value="2.25 A"/>
    <property type="chains" value="A=1-741"/>
</dbReference>
<dbReference type="PDB" id="6AS6">
    <property type="method" value="X-ray"/>
    <property type="resolution" value="1.40 A"/>
    <property type="chains" value="A=1-741"/>
</dbReference>
<dbReference type="PDB" id="6ASU">
    <property type="method" value="X-ray"/>
    <property type="resolution" value="2.32 A"/>
    <property type="chains" value="A=1-741"/>
</dbReference>
<dbReference type="PDB" id="6AU9">
    <property type="method" value="X-ray"/>
    <property type="resolution" value="2.10 A"/>
    <property type="chains" value="A=1-741"/>
</dbReference>
<dbReference type="PDB" id="6AXB">
    <property type="method" value="X-ray"/>
    <property type="resolution" value="1.80 A"/>
    <property type="chains" value="A=1-741"/>
</dbReference>
<dbReference type="PDB" id="6BA7">
    <property type="method" value="X-ray"/>
    <property type="resolution" value="2.50 A"/>
    <property type="chains" value="A=1-741"/>
</dbReference>
<dbReference type="PDB" id="6BU1">
    <property type="method" value="X-ray"/>
    <property type="resolution" value="1.58 A"/>
    <property type="chains" value="A=1-741"/>
</dbReference>
<dbReference type="PDB" id="6C2X">
    <property type="method" value="X-ray"/>
    <property type="resolution" value="2.60 A"/>
    <property type="chains" value="A=1-741"/>
</dbReference>
<dbReference type="PDB" id="6C6O">
    <property type="method" value="X-ray"/>
    <property type="resolution" value="2.30 A"/>
    <property type="chains" value="A=1-741"/>
</dbReference>
<dbReference type="PDB" id="6C7B">
    <property type="method" value="X-ray"/>
    <property type="resolution" value="2.13 A"/>
    <property type="chains" value="A=1-741"/>
</dbReference>
<dbReference type="PDB" id="6C8P">
    <property type="method" value="X-ray"/>
    <property type="resolution" value="1.64 A"/>
    <property type="chains" value="A=1-741"/>
</dbReference>
<dbReference type="PDB" id="6DKO">
    <property type="method" value="X-ray"/>
    <property type="resolution" value="1.56 A"/>
    <property type="chains" value="A=1-741"/>
</dbReference>
<dbReference type="PDB" id="6DL9">
    <property type="method" value="X-ray"/>
    <property type="resolution" value="1.80 A"/>
    <property type="chains" value="A=1-741"/>
</dbReference>
<dbReference type="PDB" id="6DLJ">
    <property type="method" value="X-ray"/>
    <property type="resolution" value="2.60 A"/>
    <property type="chains" value="A=1-741"/>
</dbReference>
<dbReference type="PDB" id="6DNP">
    <property type="method" value="X-ray"/>
    <property type="resolution" value="1.71 A"/>
    <property type="chains" value="A=1-741"/>
</dbReference>
<dbReference type="PDBsum" id="2GQ3"/>
<dbReference type="PDBsum" id="3S9I"/>
<dbReference type="PDBsum" id="3S9Z"/>
<dbReference type="PDBsum" id="3SAD"/>
<dbReference type="PDBsum" id="3SAZ"/>
<dbReference type="PDBsum" id="3SB0"/>
<dbReference type="PDBsum" id="5C7V"/>
<dbReference type="PDBsum" id="5C9R"/>
<dbReference type="PDBsum" id="5C9U"/>
<dbReference type="PDBsum" id="5C9W"/>
<dbReference type="PDBsum" id="5C9X"/>
<dbReference type="PDBsum" id="5CAH"/>
<dbReference type="PDBsum" id="5CAK"/>
<dbReference type="PDBsum" id="5CBB"/>
<dbReference type="PDBsum" id="5CBI"/>
<dbReference type="PDBsum" id="5CBJ"/>
<dbReference type="PDBsum" id="5CC3"/>
<dbReference type="PDBsum" id="5CC5"/>
<dbReference type="PDBsum" id="5CC6"/>
<dbReference type="PDBsum" id="5CC7"/>
<dbReference type="PDBsum" id="5CCZ"/>
<dbReference type="PDBsum" id="5CEW"/>
<dbReference type="PDBsum" id="5CJM"/>
<dbReference type="PDBsum" id="5CJN"/>
<dbReference type="PDBsum" id="5DRC"/>
<dbReference type="PDBsum" id="5DRI"/>
<dbReference type="PDBsum" id="5DX7"/>
<dbReference type="PDBsum" id="5E9X"/>
<dbReference type="PDBsum" id="5ECV"/>
<dbReference type="PDBsum" id="5H8M"/>
<dbReference type="PDBsum" id="5H8P"/>
<dbReference type="PDBsum" id="5H8U"/>
<dbReference type="PDBsum" id="5T8G"/>
<dbReference type="PDBsum" id="6APZ"/>
<dbReference type="PDBsum" id="6AS6"/>
<dbReference type="PDBsum" id="6ASU"/>
<dbReference type="PDBsum" id="6AU9"/>
<dbReference type="PDBsum" id="6AXB"/>
<dbReference type="PDBsum" id="6BA7"/>
<dbReference type="PDBsum" id="6BU1"/>
<dbReference type="PDBsum" id="6C2X"/>
<dbReference type="PDBsum" id="6C6O"/>
<dbReference type="PDBsum" id="6C7B"/>
<dbReference type="PDBsum" id="6C8P"/>
<dbReference type="PDBsum" id="6DKO"/>
<dbReference type="PDBsum" id="6DL9"/>
<dbReference type="PDBsum" id="6DLJ"/>
<dbReference type="PDBsum" id="6DNP"/>
<dbReference type="SMR" id="P9WK17"/>
<dbReference type="FunCoup" id="P9WK17">
    <property type="interactions" value="118"/>
</dbReference>
<dbReference type="STRING" id="83332.Rv1837c"/>
<dbReference type="DrugBank" id="DB01992">
    <property type="generic name" value="Coenzyme A"/>
</dbReference>
<dbReference type="DrugBank" id="DB03499">
    <property type="generic name" value="D-Malic acid"/>
</dbReference>
<dbReference type="DrugBank" id="DB04343">
    <property type="generic name" value="Glyoxylic acid"/>
</dbReference>
<dbReference type="MoonProt" id="P9WK17"/>
<dbReference type="PaxDb" id="83332-Rv1837c"/>
<dbReference type="DNASU" id="885713"/>
<dbReference type="GeneID" id="885713"/>
<dbReference type="KEGG" id="mtu:Rv1837c"/>
<dbReference type="KEGG" id="mtv:RVBD_1837c"/>
<dbReference type="TubercuList" id="Rv1837c"/>
<dbReference type="eggNOG" id="COG2225">
    <property type="taxonomic scope" value="Bacteria"/>
</dbReference>
<dbReference type="InParanoid" id="P9WK17"/>
<dbReference type="OrthoDB" id="9762054at2"/>
<dbReference type="PhylomeDB" id="P9WK17"/>
<dbReference type="BioCyc" id="MetaCyc:G185E-6032-MONOMER"/>
<dbReference type="BRENDA" id="2.3.3.9">
    <property type="organism ID" value="3445"/>
</dbReference>
<dbReference type="UniPathway" id="UPA00703">
    <property type="reaction ID" value="UER00720"/>
</dbReference>
<dbReference type="EvolutionaryTrace" id="P9WK17"/>
<dbReference type="PHI-base" id="PHI:7586"/>
<dbReference type="PRO" id="PR:P9WK17"/>
<dbReference type="Proteomes" id="UP000001584">
    <property type="component" value="Chromosome"/>
</dbReference>
<dbReference type="GO" id="GO:0042603">
    <property type="term" value="C:capsule"/>
    <property type="evidence" value="ECO:0000314"/>
    <property type="project" value="CAFA"/>
</dbReference>
<dbReference type="GO" id="GO:0009986">
    <property type="term" value="C:cell surface"/>
    <property type="evidence" value="ECO:0000314"/>
    <property type="project" value="CAFA"/>
</dbReference>
<dbReference type="GO" id="GO:0005737">
    <property type="term" value="C:cytoplasm"/>
    <property type="evidence" value="ECO:0000314"/>
    <property type="project" value="CAFA"/>
</dbReference>
<dbReference type="GO" id="GO:0005829">
    <property type="term" value="C:cytosol"/>
    <property type="evidence" value="ECO:0007005"/>
    <property type="project" value="MTBBASE"/>
</dbReference>
<dbReference type="GO" id="GO:0005576">
    <property type="term" value="C:extracellular region"/>
    <property type="evidence" value="ECO:0007005"/>
    <property type="project" value="MTBBASE"/>
</dbReference>
<dbReference type="GO" id="GO:0009274">
    <property type="term" value="C:peptidoglycan-based cell wall"/>
    <property type="evidence" value="ECO:0000314"/>
    <property type="project" value="MTBBASE"/>
</dbReference>
<dbReference type="GO" id="GO:0005886">
    <property type="term" value="C:plasma membrane"/>
    <property type="evidence" value="ECO:0007005"/>
    <property type="project" value="MTBBASE"/>
</dbReference>
<dbReference type="GO" id="GO:0120225">
    <property type="term" value="F:coenzyme A binding"/>
    <property type="evidence" value="ECO:0000314"/>
    <property type="project" value="UniProtKB"/>
</dbReference>
<dbReference type="GO" id="GO:0001968">
    <property type="term" value="F:fibronectin binding"/>
    <property type="evidence" value="ECO:0000353"/>
    <property type="project" value="CAFA"/>
</dbReference>
<dbReference type="GO" id="GO:0046810">
    <property type="term" value="F:host cell extracellular matrix binding"/>
    <property type="evidence" value="ECO:0000314"/>
    <property type="project" value="CAFA"/>
</dbReference>
<dbReference type="GO" id="GO:0043236">
    <property type="term" value="F:laminin binding"/>
    <property type="evidence" value="ECO:0000353"/>
    <property type="project" value="CAFA"/>
</dbReference>
<dbReference type="GO" id="GO:0000287">
    <property type="term" value="F:magnesium ion binding"/>
    <property type="evidence" value="ECO:0000314"/>
    <property type="project" value="MTBBASE"/>
</dbReference>
<dbReference type="GO" id="GO:0004474">
    <property type="term" value="F:malate synthase activity"/>
    <property type="evidence" value="ECO:0000318"/>
    <property type="project" value="GO_Central"/>
</dbReference>
<dbReference type="GO" id="GO:0042803">
    <property type="term" value="F:protein homodimerization activity"/>
    <property type="evidence" value="ECO:0000314"/>
    <property type="project" value="CAFA"/>
</dbReference>
<dbReference type="GO" id="GO:0044406">
    <property type="term" value="P:adhesion of symbiont to host"/>
    <property type="evidence" value="ECO:0000314"/>
    <property type="project" value="CAFA"/>
</dbReference>
<dbReference type="GO" id="GO:0015936">
    <property type="term" value="P:coenzyme A metabolic process"/>
    <property type="evidence" value="ECO:0000314"/>
    <property type="project" value="CAFA"/>
</dbReference>
<dbReference type="GO" id="GO:0009436">
    <property type="term" value="P:glyoxylate catabolic process"/>
    <property type="evidence" value="ECO:0000318"/>
    <property type="project" value="GO_Central"/>
</dbReference>
<dbReference type="GO" id="GO:0006097">
    <property type="term" value="P:glyoxylate cycle"/>
    <property type="evidence" value="ECO:0007669"/>
    <property type="project" value="UniProtKB-UniRule"/>
</dbReference>
<dbReference type="GO" id="GO:0006099">
    <property type="term" value="P:tricarboxylic acid cycle"/>
    <property type="evidence" value="ECO:0007669"/>
    <property type="project" value="UniProtKB-KW"/>
</dbReference>
<dbReference type="CDD" id="cd00728">
    <property type="entry name" value="malate_synt_G"/>
    <property type="match status" value="1"/>
</dbReference>
<dbReference type="FunFam" id="3.20.20.360:FF:000002">
    <property type="entry name" value="Malate synthase G"/>
    <property type="match status" value="1"/>
</dbReference>
<dbReference type="Gene3D" id="3.20.20.360">
    <property type="entry name" value="Malate synthase, domain 3"/>
    <property type="match status" value="2"/>
</dbReference>
<dbReference type="Gene3D" id="1.20.1220.12">
    <property type="entry name" value="Malate synthase, domain III"/>
    <property type="match status" value="1"/>
</dbReference>
<dbReference type="HAMAP" id="MF_00641">
    <property type="entry name" value="Malate_synth_G"/>
    <property type="match status" value="1"/>
</dbReference>
<dbReference type="InterPro" id="IPR044856">
    <property type="entry name" value="Malate_synth_C_sf"/>
</dbReference>
<dbReference type="InterPro" id="IPR011076">
    <property type="entry name" value="Malate_synth_sf"/>
</dbReference>
<dbReference type="InterPro" id="IPR001465">
    <property type="entry name" value="Malate_synthase_TIM"/>
</dbReference>
<dbReference type="InterPro" id="IPR006253">
    <property type="entry name" value="Malate_synthG"/>
</dbReference>
<dbReference type="InterPro" id="IPR048355">
    <property type="entry name" value="MS_C"/>
</dbReference>
<dbReference type="InterPro" id="IPR048356">
    <property type="entry name" value="MS_N"/>
</dbReference>
<dbReference type="InterPro" id="IPR046363">
    <property type="entry name" value="MS_N_TIM-barrel_dom"/>
</dbReference>
<dbReference type="InterPro" id="IPR048357">
    <property type="entry name" value="MSG_insertion"/>
</dbReference>
<dbReference type="NCBIfam" id="TIGR01345">
    <property type="entry name" value="malate_syn_G"/>
    <property type="match status" value="1"/>
</dbReference>
<dbReference type="NCBIfam" id="NF002825">
    <property type="entry name" value="PRK02999.1"/>
    <property type="match status" value="1"/>
</dbReference>
<dbReference type="PANTHER" id="PTHR42739">
    <property type="entry name" value="MALATE SYNTHASE G"/>
    <property type="match status" value="1"/>
</dbReference>
<dbReference type="PANTHER" id="PTHR42739:SF1">
    <property type="entry name" value="MALATE SYNTHASE G"/>
    <property type="match status" value="1"/>
</dbReference>
<dbReference type="Pfam" id="PF20659">
    <property type="entry name" value="MS_C"/>
    <property type="match status" value="1"/>
</dbReference>
<dbReference type="Pfam" id="PF20656">
    <property type="entry name" value="MS_N"/>
    <property type="match status" value="1"/>
</dbReference>
<dbReference type="Pfam" id="PF01274">
    <property type="entry name" value="MS_TIM-barrel"/>
    <property type="match status" value="1"/>
</dbReference>
<dbReference type="Pfam" id="PF20658">
    <property type="entry name" value="MSG_insertion"/>
    <property type="match status" value="1"/>
</dbReference>
<dbReference type="SUPFAM" id="SSF51645">
    <property type="entry name" value="Malate synthase G"/>
    <property type="match status" value="1"/>
</dbReference>
<sequence length="741" mass="80403">MTDRVSVGNLRIARVLYDFVNNEALPGTDIDPDSFWAGVDKVVADLTPQNQALLNARDELQAQIDKWHRRRVIEPIDMDAYRQFLTEIGYLLPEPDDFTITTSGVDAEITTTAGPQLVVPVLNARFALNAANARWGSLYDALYGTDVIPETDGAEKGPTYNKVRGDKVIAYARKFLDDSVPLSSGSFGDATGFTVQDGQLVVALPDKSTGLANPGQFAGYTGAAESPTSVLLINHGLHIEILIDPESQVGTTDRAGVKDVILESAITTIMDFEDSVAAVDAADKVLGYRNWLGLNKGDLAAAVDKDGTAFLRVLNRDRNYTAPGGGQFTLPGRSLMFVRNVGHLMTNDAIVDTDGSEVFEGIMDALFTGLIAIHGLKASDVNGPLINSRTGSIYIVKPKMHGPAEVAFTCELFSRVEDVLGLPQNTMKIGIMDEERRTTVNLKACIKAAADRVVFINTGFLDRTGDEIHTSMEAGPMVRKGTMKSQPWILAYEDHNVDAGLAAGFSGRAQVGKGMWTMTELMADMVETKIAQPRAGASTAWVPSPTAATLHALHYHQVDVAAVQQGLAGKRRATIEQLLTIPLAKELAWAPDEIREEVDNNCQSILGYVVRWVDQGVGCSKVPDIHDVALMEDRATLRISSQLLANWLRHGVITSADVRASLERMAPLVDRQNAGDVAYRPMAPNFDDSIAFLAAQELILSGAQQPNGYTEPILHRRRREFKARAAEKPAPSDRAGDDAAR</sequence>
<comment type="function">
    <text evidence="1">Involved in the glycolate utilization. Catalyzes the condensation and subsequent hydrolysis of acetyl-coenzyme A (acetyl-CoA) and glyoxylate to form malate and CoA.</text>
</comment>
<comment type="catalytic activity">
    <reaction evidence="1">
        <text>glyoxylate + acetyl-CoA + H2O = (S)-malate + CoA + H(+)</text>
        <dbReference type="Rhea" id="RHEA:18181"/>
        <dbReference type="ChEBI" id="CHEBI:15377"/>
        <dbReference type="ChEBI" id="CHEBI:15378"/>
        <dbReference type="ChEBI" id="CHEBI:15589"/>
        <dbReference type="ChEBI" id="CHEBI:36655"/>
        <dbReference type="ChEBI" id="CHEBI:57287"/>
        <dbReference type="ChEBI" id="CHEBI:57288"/>
        <dbReference type="EC" id="2.3.3.9"/>
    </reaction>
</comment>
<comment type="cofactor">
    <cofactor evidence="1 3 4">
        <name>Mg(2+)</name>
        <dbReference type="ChEBI" id="CHEBI:18420"/>
    </cofactor>
    <cofactor evidence="1 3 4">
        <name>Mn(2+)</name>
        <dbReference type="ChEBI" id="CHEBI:29035"/>
    </cofactor>
    <text evidence="1 3 4">Mg(2+). Mn(2+) is able to replace Mg(2+).</text>
</comment>
<comment type="activity regulation">
    <text evidence="4">By bromopyruvate, oxalate, and phosphoenolpyruvate. Malate inhibits the activity to 50% at 1 mM concentration. Glycolate inhibits only at fairly high concentrations.</text>
</comment>
<comment type="pathway">
    <text evidence="1">Carbohydrate metabolism; glyoxylate cycle; (S)-malate from isocitrate: step 2/2.</text>
</comment>
<comment type="subunit">
    <text evidence="3 4">Homodimer.</text>
</comment>
<comment type="subcellular location">
    <subcellularLocation>
        <location evidence="1">Cytoplasm</location>
    </subcellularLocation>
</comment>
<comment type="similarity">
    <text evidence="1">Belongs to the malate synthase family. GlcB subfamily.</text>
</comment>
<proteinExistence type="evidence at protein level"/>
<feature type="chain" id="PRO_0000166889" description="Malate synthase G">
    <location>
        <begin position="1"/>
        <end position="741"/>
    </location>
</feature>
<feature type="region of interest" description="Disordered" evidence="2">
    <location>
        <begin position="718"/>
        <end position="741"/>
    </location>
</feature>
<feature type="compositionally biased region" description="Basic and acidic residues" evidence="2">
    <location>
        <begin position="722"/>
        <end position="741"/>
    </location>
</feature>
<feature type="active site" description="Proton acceptor">
    <location>
        <position position="339"/>
    </location>
</feature>
<feature type="active site" description="Proton donor">
    <location>
        <position position="633"/>
    </location>
</feature>
<feature type="binding site">
    <location>
        <position position="118"/>
    </location>
    <ligand>
        <name>acetyl-CoA</name>
        <dbReference type="ChEBI" id="CHEBI:57288"/>
    </ligand>
</feature>
<feature type="binding site">
    <location>
        <begin position="125"/>
        <end position="129"/>
    </location>
    <ligand>
        <name>acetyl-CoA</name>
        <dbReference type="ChEBI" id="CHEBI:57288"/>
    </ligand>
</feature>
<feature type="binding site">
    <location>
        <position position="275"/>
    </location>
    <ligand>
        <name>acetyl-CoA</name>
        <dbReference type="ChEBI" id="CHEBI:57288"/>
    </ligand>
</feature>
<feature type="binding site">
    <location>
        <position position="305"/>
    </location>
    <ligand>
        <name>acetyl-CoA</name>
        <dbReference type="ChEBI" id="CHEBI:57288"/>
    </ligand>
</feature>
<feature type="binding site">
    <location>
        <position position="312"/>
    </location>
    <ligand>
        <name>acetyl-CoA</name>
        <dbReference type="ChEBI" id="CHEBI:57288"/>
    </ligand>
</feature>
<feature type="binding site">
    <location>
        <position position="339"/>
    </location>
    <ligand>
        <name>glyoxylate</name>
        <dbReference type="ChEBI" id="CHEBI:36655"/>
    </ligand>
</feature>
<feature type="binding site">
    <location>
        <position position="434"/>
    </location>
    <ligand>
        <name>glyoxylate</name>
        <dbReference type="ChEBI" id="CHEBI:36655"/>
    </ligand>
</feature>
<feature type="binding site">
    <location>
        <position position="434"/>
    </location>
    <ligand>
        <name>Mg(2+)</name>
        <dbReference type="ChEBI" id="CHEBI:18420"/>
    </ligand>
</feature>
<feature type="binding site">
    <location>
        <begin position="459"/>
        <end position="462"/>
    </location>
    <ligand>
        <name>glyoxylate</name>
        <dbReference type="ChEBI" id="CHEBI:36655"/>
    </ligand>
</feature>
<feature type="binding site">
    <location>
        <position position="462"/>
    </location>
    <ligand>
        <name>Mg(2+)</name>
        <dbReference type="ChEBI" id="CHEBI:18420"/>
    </ligand>
</feature>
<feature type="binding site">
    <location>
        <position position="543"/>
    </location>
    <ligand>
        <name>acetyl-CoA</name>
        <dbReference type="ChEBI" id="CHEBI:57288"/>
    </ligand>
</feature>
<feature type="binding site">
    <location>
        <begin position="618"/>
        <end position="621"/>
    </location>
    <ligand>
        <name>acetyl-CoA</name>
        <dbReference type="ChEBI" id="CHEBI:57288"/>
    </ligand>
</feature>
<feature type="binding site">
    <location>
        <position position="633"/>
    </location>
    <ligand>
        <name>acetyl-CoA</name>
        <dbReference type="ChEBI" id="CHEBI:57288"/>
    </ligand>
</feature>
<feature type="modified residue" description="Cysteine sulfenic acid (-SOH)" evidence="1">
    <location>
        <position position="619"/>
    </location>
</feature>
<feature type="strand" evidence="11">
    <location>
        <begin position="4"/>
        <end position="7"/>
    </location>
</feature>
<feature type="strand" evidence="11">
    <location>
        <begin position="10"/>
        <end position="13"/>
    </location>
</feature>
<feature type="helix" evidence="11">
    <location>
        <begin position="14"/>
        <end position="22"/>
    </location>
</feature>
<feature type="turn" evidence="13">
    <location>
        <begin position="26"/>
        <end position="29"/>
    </location>
</feature>
<feature type="helix" evidence="11">
    <location>
        <begin position="32"/>
        <end position="69"/>
    </location>
</feature>
<feature type="strand" evidence="13">
    <location>
        <begin position="73"/>
        <end position="75"/>
    </location>
</feature>
<feature type="helix" evidence="11">
    <location>
        <begin position="78"/>
        <end position="87"/>
    </location>
</feature>
<feature type="helix" evidence="11">
    <location>
        <begin position="107"/>
        <end position="110"/>
    </location>
</feature>
<feature type="strand" evidence="11">
    <location>
        <begin position="116"/>
        <end position="120"/>
    </location>
</feature>
<feature type="helix" evidence="11">
    <location>
        <begin position="124"/>
        <end position="131"/>
    </location>
</feature>
<feature type="helix" evidence="11">
    <location>
        <begin position="132"/>
        <end position="134"/>
    </location>
</feature>
<feature type="strand" evidence="11">
    <location>
        <begin position="135"/>
        <end position="137"/>
    </location>
</feature>
<feature type="helix" evidence="11">
    <location>
        <begin position="138"/>
        <end position="143"/>
    </location>
</feature>
<feature type="strand" evidence="12">
    <location>
        <begin position="145"/>
        <end position="148"/>
    </location>
</feature>
<feature type="strand" evidence="7">
    <location>
        <begin position="151"/>
        <end position="153"/>
    </location>
</feature>
<feature type="helix" evidence="11">
    <location>
        <begin position="162"/>
        <end position="179"/>
    </location>
</feature>
<feature type="strand" evidence="11">
    <location>
        <begin position="182"/>
        <end position="185"/>
    </location>
</feature>
<feature type="helix" evidence="11">
    <location>
        <begin position="187"/>
        <end position="189"/>
    </location>
</feature>
<feature type="strand" evidence="11">
    <location>
        <begin position="192"/>
        <end position="196"/>
    </location>
</feature>
<feature type="strand" evidence="11">
    <location>
        <begin position="199"/>
        <end position="203"/>
    </location>
</feature>
<feature type="strand" evidence="6">
    <location>
        <begin position="205"/>
        <end position="207"/>
    </location>
</feature>
<feature type="strand" evidence="11">
    <location>
        <begin position="211"/>
        <end position="213"/>
    </location>
</feature>
<feature type="helix" evidence="11">
    <location>
        <begin position="214"/>
        <end position="216"/>
    </location>
</feature>
<feature type="strand" evidence="11">
    <location>
        <begin position="217"/>
        <end position="222"/>
    </location>
</feature>
<feature type="strand" evidence="11">
    <location>
        <begin position="224"/>
        <end position="234"/>
    </location>
</feature>
<feature type="strand" evidence="11">
    <location>
        <begin position="237"/>
        <end position="243"/>
    </location>
</feature>
<feature type="helix" evidence="11">
    <location>
        <begin position="250"/>
        <end position="252"/>
    </location>
</feature>
<feature type="strand" evidence="10">
    <location>
        <begin position="253"/>
        <end position="255"/>
    </location>
</feature>
<feature type="strand" evidence="11">
    <location>
        <begin position="257"/>
        <end position="263"/>
    </location>
</feature>
<feature type="strand" evidence="11">
    <location>
        <begin position="266"/>
        <end position="273"/>
    </location>
</feature>
<feature type="helix" evidence="11">
    <location>
        <begin position="281"/>
        <end position="296"/>
    </location>
</feature>
<feature type="strand" evidence="5">
    <location>
        <begin position="300"/>
        <end position="305"/>
    </location>
</feature>
<feature type="strand" evidence="5">
    <location>
        <begin position="308"/>
        <end position="313"/>
    </location>
</feature>
<feature type="strand" evidence="11">
    <location>
        <begin position="318"/>
        <end position="321"/>
    </location>
</feature>
<feature type="strand" evidence="16">
    <location>
        <begin position="323"/>
        <end position="325"/>
    </location>
</feature>
<feature type="strand" evidence="11">
    <location>
        <begin position="327"/>
        <end position="330"/>
    </location>
</feature>
<feature type="strand" evidence="11">
    <location>
        <begin position="335"/>
        <end position="339"/>
    </location>
</feature>
<feature type="strand" evidence="11">
    <location>
        <begin position="346"/>
        <end position="352"/>
    </location>
</feature>
<feature type="strand" evidence="10">
    <location>
        <begin position="353"/>
        <end position="355"/>
    </location>
</feature>
<feature type="strand" evidence="11">
    <location>
        <begin position="357"/>
        <end position="359"/>
    </location>
</feature>
<feature type="helix" evidence="11">
    <location>
        <begin position="360"/>
        <end position="372"/>
    </location>
</feature>
<feature type="helix" evidence="11">
    <location>
        <begin position="373"/>
        <end position="376"/>
    </location>
</feature>
<feature type="turn" evidence="8">
    <location>
        <begin position="380"/>
        <end position="382"/>
    </location>
</feature>
<feature type="strand" evidence="15">
    <location>
        <begin position="385"/>
        <end position="387"/>
    </location>
</feature>
<feature type="strand" evidence="16">
    <location>
        <begin position="389"/>
        <end position="391"/>
    </location>
</feature>
<feature type="strand" evidence="11">
    <location>
        <begin position="393"/>
        <end position="397"/>
    </location>
</feature>
<feature type="helix" evidence="11">
    <location>
        <begin position="403"/>
        <end position="420"/>
    </location>
</feature>
<feature type="strand" evidence="11">
    <location>
        <begin position="427"/>
        <end position="433"/>
    </location>
</feature>
<feature type="helix" evidence="11">
    <location>
        <begin position="436"/>
        <end position="439"/>
    </location>
</feature>
<feature type="helix" evidence="11">
    <location>
        <begin position="442"/>
        <end position="448"/>
    </location>
</feature>
<feature type="turn" evidence="11">
    <location>
        <begin position="449"/>
        <end position="452"/>
    </location>
</feature>
<feature type="strand" evidence="11">
    <location>
        <begin position="453"/>
        <end position="458"/>
    </location>
</feature>
<feature type="helix" evidence="11">
    <location>
        <begin position="460"/>
        <end position="470"/>
    </location>
</feature>
<feature type="helix" evidence="11">
    <location>
        <begin position="472"/>
        <end position="474"/>
    </location>
</feature>
<feature type="helix" evidence="11">
    <location>
        <begin position="480"/>
        <end position="485"/>
    </location>
</feature>
<feature type="helix" evidence="11">
    <location>
        <begin position="487"/>
        <end position="502"/>
    </location>
</feature>
<feature type="turn" evidence="11">
    <location>
        <begin position="506"/>
        <end position="508"/>
    </location>
</feature>
<feature type="strand" evidence="11">
    <location>
        <begin position="509"/>
        <end position="513"/>
    </location>
</feature>
<feature type="strand" evidence="17">
    <location>
        <begin position="518"/>
        <end position="520"/>
    </location>
</feature>
<feature type="helix" evidence="11">
    <location>
        <begin position="522"/>
        <end position="528"/>
    </location>
</feature>
<feature type="helix" evidence="11">
    <location>
        <begin position="531"/>
        <end position="534"/>
    </location>
</feature>
<feature type="strand" evidence="11">
    <location>
        <begin position="538"/>
        <end position="544"/>
    </location>
</feature>
<feature type="helix" evidence="11">
    <location>
        <begin position="545"/>
        <end position="557"/>
    </location>
</feature>
<feature type="helix" evidence="11">
    <location>
        <begin position="560"/>
        <end position="567"/>
    </location>
</feature>
<feature type="helix" evidence="11">
    <location>
        <begin position="575"/>
        <end position="578"/>
    </location>
</feature>
<feature type="strand" evidence="9">
    <location>
        <begin position="585"/>
        <end position="587"/>
    </location>
</feature>
<feature type="helix" evidence="11">
    <location>
        <begin position="591"/>
        <end position="615"/>
    </location>
</feature>
<feature type="strand" evidence="11">
    <location>
        <begin position="620"/>
        <end position="623"/>
    </location>
</feature>
<feature type="strand" evidence="10">
    <location>
        <begin position="625"/>
        <end position="627"/>
    </location>
</feature>
<feature type="strand" evidence="11">
    <location>
        <begin position="629"/>
        <end position="632"/>
    </location>
</feature>
<feature type="helix" evidence="11">
    <location>
        <begin position="634"/>
        <end position="649"/>
    </location>
</feature>
<feature type="helix" evidence="11">
    <location>
        <begin position="655"/>
        <end position="672"/>
    </location>
</feature>
<feature type="turn" evidence="16">
    <location>
        <begin position="673"/>
        <end position="675"/>
    </location>
</feature>
<feature type="strand" evidence="13">
    <location>
        <begin position="676"/>
        <end position="678"/>
    </location>
</feature>
<feature type="strand" evidence="14">
    <location>
        <begin position="683"/>
        <end position="685"/>
    </location>
</feature>
<feature type="helix" evidence="11">
    <location>
        <begin position="686"/>
        <end position="688"/>
    </location>
</feature>
<feature type="helix" evidence="11">
    <location>
        <begin position="690"/>
        <end position="700"/>
    </location>
</feature>
<feature type="helix" evidence="11">
    <location>
        <begin position="702"/>
        <end position="704"/>
    </location>
</feature>
<feature type="helix" evidence="11">
    <location>
        <begin position="706"/>
        <end position="708"/>
    </location>
</feature>
<feature type="helix" evidence="11">
    <location>
        <begin position="711"/>
        <end position="725"/>
    </location>
</feature>
<gene>
    <name evidence="1" type="primary">glcB</name>
    <name type="ordered locus">Rv1837c</name>
    <name type="ORF">MTCY1A11.06</name>
</gene>
<protein>
    <recommendedName>
        <fullName evidence="1">Malate synthase G</fullName>
        <ecNumber evidence="1">2.3.3.9</ecNumber>
    </recommendedName>
</protein>
<organism>
    <name type="scientific">Mycobacterium tuberculosis (strain ATCC 25618 / H37Rv)</name>
    <dbReference type="NCBI Taxonomy" id="83332"/>
    <lineage>
        <taxon>Bacteria</taxon>
        <taxon>Bacillati</taxon>
        <taxon>Actinomycetota</taxon>
        <taxon>Actinomycetes</taxon>
        <taxon>Mycobacteriales</taxon>
        <taxon>Mycobacteriaceae</taxon>
        <taxon>Mycobacterium</taxon>
        <taxon>Mycobacterium tuberculosis complex</taxon>
    </lineage>
</organism>
<name>MASZ_MYCTU</name>
<keyword id="KW-0002">3D-structure</keyword>
<keyword id="KW-0963">Cytoplasm</keyword>
<keyword id="KW-0329">Glyoxylate bypass</keyword>
<keyword id="KW-0460">Magnesium</keyword>
<keyword id="KW-0479">Metal-binding</keyword>
<keyword id="KW-0558">Oxidation</keyword>
<keyword id="KW-1185">Reference proteome</keyword>
<keyword id="KW-0808">Transferase</keyword>
<keyword id="KW-0816">Tricarboxylic acid cycle</keyword>
<reference key="1">
    <citation type="journal article" date="1998" name="Nature">
        <title>Deciphering the biology of Mycobacterium tuberculosis from the complete genome sequence.</title>
        <authorList>
            <person name="Cole S.T."/>
            <person name="Brosch R."/>
            <person name="Parkhill J."/>
            <person name="Garnier T."/>
            <person name="Churcher C.M."/>
            <person name="Harris D.E."/>
            <person name="Gordon S.V."/>
            <person name="Eiglmeier K."/>
            <person name="Gas S."/>
            <person name="Barry C.E. III"/>
            <person name="Tekaia F."/>
            <person name="Badcock K."/>
            <person name="Basham D."/>
            <person name="Brown D."/>
            <person name="Chillingworth T."/>
            <person name="Connor R."/>
            <person name="Davies R.M."/>
            <person name="Devlin K."/>
            <person name="Feltwell T."/>
            <person name="Gentles S."/>
            <person name="Hamlin N."/>
            <person name="Holroyd S."/>
            <person name="Hornsby T."/>
            <person name="Jagels K."/>
            <person name="Krogh A."/>
            <person name="McLean J."/>
            <person name="Moule S."/>
            <person name="Murphy L.D."/>
            <person name="Oliver S."/>
            <person name="Osborne J."/>
            <person name="Quail M.A."/>
            <person name="Rajandream M.A."/>
            <person name="Rogers J."/>
            <person name="Rutter S."/>
            <person name="Seeger K."/>
            <person name="Skelton S."/>
            <person name="Squares S."/>
            <person name="Squares R."/>
            <person name="Sulston J.E."/>
            <person name="Taylor K."/>
            <person name="Whitehead S."/>
            <person name="Barrell B.G."/>
        </authorList>
    </citation>
    <scope>NUCLEOTIDE SEQUENCE [LARGE SCALE GENOMIC DNA]</scope>
    <source>
        <strain>ATCC 25618 / H37Rv</strain>
    </source>
</reference>
<reference key="2">
    <citation type="journal article" date="2011" name="Mol. Cell. Proteomics">
        <title>Proteogenomic analysis of Mycobacterium tuberculosis by high resolution mass spectrometry.</title>
        <authorList>
            <person name="Kelkar D.S."/>
            <person name="Kumar D."/>
            <person name="Kumar P."/>
            <person name="Balakrishnan L."/>
            <person name="Muthusamy B."/>
            <person name="Yadav A.K."/>
            <person name="Shrivastava P."/>
            <person name="Marimuthu A."/>
            <person name="Anand S."/>
            <person name="Sundaram H."/>
            <person name="Kingsbury R."/>
            <person name="Harsha H.C."/>
            <person name="Nair B."/>
            <person name="Prasad T.S."/>
            <person name="Chauhan D.S."/>
            <person name="Katoch K."/>
            <person name="Katoch V.M."/>
            <person name="Kumar P."/>
            <person name="Chaerkady R."/>
            <person name="Ramachandran S."/>
            <person name="Dash D."/>
            <person name="Pandey A."/>
        </authorList>
    </citation>
    <scope>IDENTIFICATION BY MASS SPECTROMETRY [LARGE SCALE ANALYSIS]</scope>
    <source>
        <strain>ATCC 25618 / H37Rv</strain>
    </source>
</reference>
<reference key="3">
    <citation type="journal article" date="2006" name="Protein Sci.">
        <title>The product complex of M. tuberculosis malate synthase revisited.</title>
        <authorList>
            <person name="Anstrom D.M."/>
            <person name="Remington S.J."/>
        </authorList>
    </citation>
    <scope>X-RAY CRYSTALLOGRAPHY (2.30 ANGSTROMS) OF 1-726 IN COMPLEX WITH SUBSTRATES AND MAGNESIUM ION</scope>
    <scope>COFACTOR</scope>
    <scope>SUBUNIT</scope>
</reference>
<reference key="4">
    <citation type="journal article" date="2012" name="Chem. Biol.">
        <title>Structure-guided discovery of phenyl-diketo acids as potent inhibitors of M. tuberculosis malate synthase.</title>
        <authorList>
            <person name="Krieger I.V."/>
            <person name="Freundlich J.S."/>
            <person name="Gawandi V.B."/>
            <person name="Roberts J.P."/>
            <person name="Sun Q."/>
            <person name="Owen J.L."/>
            <person name="Fraile M.T."/>
            <person name="Huss S.I."/>
            <person name="Lavandera J.L."/>
            <person name="Ioerger T.R."/>
            <person name="Sacchettini J.C."/>
        </authorList>
    </citation>
    <scope>X-RAY CRYSTALLOGRAPHY (1.79 ANGSTROMS) IN COMPLEX WITH SUBSTRATE ANALOGS AND MAGNESIUM ION</scope>
    <scope>ACTIVITY REGULATION</scope>
    <scope>COFACTOR</scope>
    <scope>SUBUNIT</scope>
</reference>
<evidence type="ECO:0000255" key="1">
    <source>
        <dbReference type="HAMAP-Rule" id="MF_00641"/>
    </source>
</evidence>
<evidence type="ECO:0000256" key="2">
    <source>
        <dbReference type="SAM" id="MobiDB-lite"/>
    </source>
</evidence>
<evidence type="ECO:0000269" key="3">
    <source>
    </source>
</evidence>
<evidence type="ECO:0000269" key="4">
    <source>
    </source>
</evidence>
<evidence type="ECO:0007829" key="5">
    <source>
        <dbReference type="PDB" id="2GQ3"/>
    </source>
</evidence>
<evidence type="ECO:0007829" key="6">
    <source>
        <dbReference type="PDB" id="5CBJ"/>
    </source>
</evidence>
<evidence type="ECO:0007829" key="7">
    <source>
        <dbReference type="PDB" id="5CJM"/>
    </source>
</evidence>
<evidence type="ECO:0007829" key="8">
    <source>
        <dbReference type="PDB" id="5E9X"/>
    </source>
</evidence>
<evidence type="ECO:0007829" key="9">
    <source>
        <dbReference type="PDB" id="5H8M"/>
    </source>
</evidence>
<evidence type="ECO:0007829" key="10">
    <source>
        <dbReference type="PDB" id="5H8U"/>
    </source>
</evidence>
<evidence type="ECO:0007829" key="11">
    <source>
        <dbReference type="PDB" id="6AS6"/>
    </source>
</evidence>
<evidence type="ECO:0007829" key="12">
    <source>
        <dbReference type="PDB" id="6AXB"/>
    </source>
</evidence>
<evidence type="ECO:0007829" key="13">
    <source>
        <dbReference type="PDB" id="6BU1"/>
    </source>
</evidence>
<evidence type="ECO:0007829" key="14">
    <source>
        <dbReference type="PDB" id="6C7B"/>
    </source>
</evidence>
<evidence type="ECO:0007829" key="15">
    <source>
        <dbReference type="PDB" id="6C8P"/>
    </source>
</evidence>
<evidence type="ECO:0007829" key="16">
    <source>
        <dbReference type="PDB" id="6DKO"/>
    </source>
</evidence>
<evidence type="ECO:0007829" key="17">
    <source>
        <dbReference type="PDB" id="6DLJ"/>
    </source>
</evidence>
<accession>P9WK17</accession>
<accession>L0T815</accession>
<accession>P0A5J4</accession>
<accession>Q50596</accession>